<sequence>MTEYLLLLVGTVLINNFVLVKFLGLCPFMGVSGKLETAIGMGLATTFVMTLASACSYLMEHYILIPLNIAYLRTLAFILVIAVVVQFTEMVIRKSSPTLYRLLGIFLPLITTNCAVLGVALLSINEHHNFIQSIIYGFGAATGFSLVLILFAAMRERLVAADVPTPFRGVSIAMITAGLMSLAFMGFTGLIKI</sequence>
<dbReference type="EC" id="7.-.-.-" evidence="1"/>
<dbReference type="EMBL" id="CP000462">
    <property type="protein sequence ID" value="ABK36380.1"/>
    <property type="molecule type" value="Genomic_DNA"/>
</dbReference>
<dbReference type="RefSeq" id="YP_857143.1">
    <property type="nucleotide sequence ID" value="NC_008570.1"/>
</dbReference>
<dbReference type="SMR" id="A0KLJ2"/>
<dbReference type="STRING" id="380703.AHA_2634"/>
<dbReference type="EnsemblBacteria" id="ABK36380">
    <property type="protein sequence ID" value="ABK36380"/>
    <property type="gene ID" value="AHA_2634"/>
</dbReference>
<dbReference type="KEGG" id="aha:AHA_2634"/>
<dbReference type="PATRIC" id="fig|380703.7.peg.2637"/>
<dbReference type="eggNOG" id="COG4657">
    <property type="taxonomic scope" value="Bacteria"/>
</dbReference>
<dbReference type="HOGENOM" id="CLU_095255_1_0_6"/>
<dbReference type="OrthoDB" id="9803631at2"/>
<dbReference type="PRO" id="PR:A0KLJ2"/>
<dbReference type="Proteomes" id="UP000000756">
    <property type="component" value="Chromosome"/>
</dbReference>
<dbReference type="GO" id="GO:0005886">
    <property type="term" value="C:plasma membrane"/>
    <property type="evidence" value="ECO:0007669"/>
    <property type="project" value="UniProtKB-SubCell"/>
</dbReference>
<dbReference type="GO" id="GO:0022900">
    <property type="term" value="P:electron transport chain"/>
    <property type="evidence" value="ECO:0007669"/>
    <property type="project" value="UniProtKB-UniRule"/>
</dbReference>
<dbReference type="HAMAP" id="MF_00459">
    <property type="entry name" value="RsxA_RnfA"/>
    <property type="match status" value="1"/>
</dbReference>
<dbReference type="InterPro" id="IPR011293">
    <property type="entry name" value="Ion_transpt_RnfA/RsxA"/>
</dbReference>
<dbReference type="InterPro" id="IPR003667">
    <property type="entry name" value="NqrDE/RnfAE"/>
</dbReference>
<dbReference type="InterPro" id="IPR050133">
    <property type="entry name" value="NqrDE/RnfAE_oxidrdctase"/>
</dbReference>
<dbReference type="NCBIfam" id="NF003481">
    <property type="entry name" value="PRK05151.1"/>
    <property type="match status" value="1"/>
</dbReference>
<dbReference type="NCBIfam" id="TIGR01943">
    <property type="entry name" value="rnfA"/>
    <property type="match status" value="1"/>
</dbReference>
<dbReference type="PANTHER" id="PTHR30335">
    <property type="entry name" value="INTEGRAL MEMBRANE PROTEIN OF SOXR-REDUCING COMPLEX"/>
    <property type="match status" value="1"/>
</dbReference>
<dbReference type="PANTHER" id="PTHR30335:SF0">
    <property type="entry name" value="ION-TRANSLOCATING OXIDOREDUCTASE COMPLEX SUBUNIT A"/>
    <property type="match status" value="1"/>
</dbReference>
<dbReference type="Pfam" id="PF02508">
    <property type="entry name" value="Rnf-Nqr"/>
    <property type="match status" value="1"/>
</dbReference>
<dbReference type="PIRSF" id="PIRSF006102">
    <property type="entry name" value="NQR_DE"/>
    <property type="match status" value="1"/>
</dbReference>
<accession>A0KLJ2</accession>
<comment type="function">
    <text evidence="1">Part of a membrane-bound complex that couples electron transfer with translocation of ions across the membrane.</text>
</comment>
<comment type="subunit">
    <text evidence="1">The complex is composed of six subunits: RnfA, RnfB, RnfC, RnfD, RnfE and RnfG.</text>
</comment>
<comment type="subcellular location">
    <subcellularLocation>
        <location evidence="1">Cell inner membrane</location>
        <topology evidence="1">Multi-pass membrane protein</topology>
    </subcellularLocation>
</comment>
<comment type="similarity">
    <text evidence="1">Belongs to the NqrDE/RnfAE family.</text>
</comment>
<organism>
    <name type="scientific">Aeromonas hydrophila subsp. hydrophila (strain ATCC 7966 / DSM 30187 / BCRC 13018 / CCUG 14551 / JCM 1027 / KCTC 2358 / NCIMB 9240 / NCTC 8049)</name>
    <dbReference type="NCBI Taxonomy" id="380703"/>
    <lineage>
        <taxon>Bacteria</taxon>
        <taxon>Pseudomonadati</taxon>
        <taxon>Pseudomonadota</taxon>
        <taxon>Gammaproteobacteria</taxon>
        <taxon>Aeromonadales</taxon>
        <taxon>Aeromonadaceae</taxon>
        <taxon>Aeromonas</taxon>
    </lineage>
</organism>
<gene>
    <name evidence="1" type="primary">rnfA</name>
    <name type="ordered locus">AHA_2634</name>
</gene>
<proteinExistence type="inferred from homology"/>
<keyword id="KW-0997">Cell inner membrane</keyword>
<keyword id="KW-1003">Cell membrane</keyword>
<keyword id="KW-0249">Electron transport</keyword>
<keyword id="KW-0472">Membrane</keyword>
<keyword id="KW-1185">Reference proteome</keyword>
<keyword id="KW-1278">Translocase</keyword>
<keyword id="KW-0812">Transmembrane</keyword>
<keyword id="KW-1133">Transmembrane helix</keyword>
<keyword id="KW-0813">Transport</keyword>
<feature type="chain" id="PRO_1000013519" description="Ion-translocating oxidoreductase complex subunit A">
    <location>
        <begin position="1"/>
        <end position="193"/>
    </location>
</feature>
<feature type="transmembrane region" description="Helical" evidence="1">
    <location>
        <begin position="5"/>
        <end position="25"/>
    </location>
</feature>
<feature type="transmembrane region" description="Helical" evidence="1">
    <location>
        <begin position="39"/>
        <end position="59"/>
    </location>
</feature>
<feature type="transmembrane region" description="Helical" evidence="1">
    <location>
        <begin position="63"/>
        <end position="83"/>
    </location>
</feature>
<feature type="transmembrane region" description="Helical" evidence="1">
    <location>
        <begin position="102"/>
        <end position="122"/>
    </location>
</feature>
<feature type="transmembrane region" description="Helical" evidence="1">
    <location>
        <begin position="134"/>
        <end position="154"/>
    </location>
</feature>
<feature type="transmembrane region" description="Helical" evidence="1">
    <location>
        <begin position="171"/>
        <end position="191"/>
    </location>
</feature>
<protein>
    <recommendedName>
        <fullName evidence="1">Ion-translocating oxidoreductase complex subunit A</fullName>
        <ecNumber evidence="1">7.-.-.-</ecNumber>
    </recommendedName>
    <alternativeName>
        <fullName evidence="1">Rnf electron transport complex subunit A</fullName>
    </alternativeName>
</protein>
<reference key="1">
    <citation type="journal article" date="2006" name="J. Bacteriol.">
        <title>Genome sequence of Aeromonas hydrophila ATCC 7966T: jack of all trades.</title>
        <authorList>
            <person name="Seshadri R."/>
            <person name="Joseph S.W."/>
            <person name="Chopra A.K."/>
            <person name="Sha J."/>
            <person name="Shaw J."/>
            <person name="Graf J."/>
            <person name="Haft D.H."/>
            <person name="Wu M."/>
            <person name="Ren Q."/>
            <person name="Rosovitz M.J."/>
            <person name="Madupu R."/>
            <person name="Tallon L."/>
            <person name="Kim M."/>
            <person name="Jin S."/>
            <person name="Vuong H."/>
            <person name="Stine O.C."/>
            <person name="Ali A."/>
            <person name="Horneman A.J."/>
            <person name="Heidelberg J.F."/>
        </authorList>
    </citation>
    <scope>NUCLEOTIDE SEQUENCE [LARGE SCALE GENOMIC DNA]</scope>
    <source>
        <strain>ATCC 7966 / DSM 30187 / BCRC 13018 / CCUG 14551 / JCM 1027 / KCTC 2358 / NCIMB 9240 / NCTC 8049</strain>
    </source>
</reference>
<evidence type="ECO:0000255" key="1">
    <source>
        <dbReference type="HAMAP-Rule" id="MF_00459"/>
    </source>
</evidence>
<name>RNFA_AERHH</name>